<keyword id="KW-1003">Cell membrane</keyword>
<keyword id="KW-0472">Membrane</keyword>
<keyword id="KW-1185">Reference proteome</keyword>
<keyword id="KW-0812">Transmembrane</keyword>
<keyword id="KW-1133">Transmembrane helix</keyword>
<reference key="1">
    <citation type="journal article" date="1996" name="Science">
        <title>Complete genome sequence of the methanogenic archaeon, Methanococcus jannaschii.</title>
        <authorList>
            <person name="Bult C.J."/>
            <person name="White O."/>
            <person name="Olsen G.J."/>
            <person name="Zhou L."/>
            <person name="Fleischmann R.D."/>
            <person name="Sutton G.G."/>
            <person name="Blake J.A."/>
            <person name="FitzGerald L.M."/>
            <person name="Clayton R.A."/>
            <person name="Gocayne J.D."/>
            <person name="Kerlavage A.R."/>
            <person name="Dougherty B.A."/>
            <person name="Tomb J.-F."/>
            <person name="Adams M.D."/>
            <person name="Reich C.I."/>
            <person name="Overbeek R."/>
            <person name="Kirkness E.F."/>
            <person name="Weinstock K.G."/>
            <person name="Merrick J.M."/>
            <person name="Glodek A."/>
            <person name="Scott J.L."/>
            <person name="Geoghagen N.S.M."/>
            <person name="Weidman J.F."/>
            <person name="Fuhrmann J.L."/>
            <person name="Nguyen D."/>
            <person name="Utterback T.R."/>
            <person name="Kelley J.M."/>
            <person name="Peterson J.D."/>
            <person name="Sadow P.W."/>
            <person name="Hanna M.C."/>
            <person name="Cotton M.D."/>
            <person name="Roberts K.M."/>
            <person name="Hurst M.A."/>
            <person name="Kaine B.P."/>
            <person name="Borodovsky M."/>
            <person name="Klenk H.-P."/>
            <person name="Fraser C.M."/>
            <person name="Smith H.O."/>
            <person name="Woese C.R."/>
            <person name="Venter J.C."/>
        </authorList>
    </citation>
    <scope>NUCLEOTIDE SEQUENCE [LARGE SCALE GENOMIC DNA]</scope>
    <source>
        <strain>ATCC 43067 / DSM 2661 / JAL-1 / JCM 10045 / NBRC 100440</strain>
    </source>
</reference>
<feature type="chain" id="PRO_0000107224" description="Uncharacterized protein MJ1223">
    <location>
        <begin position="1"/>
        <end position="92"/>
    </location>
</feature>
<feature type="transmembrane region" description="Helical" evidence="1">
    <location>
        <begin position="1"/>
        <end position="21"/>
    </location>
</feature>
<feature type="transmembrane region" description="Helical" evidence="1">
    <location>
        <begin position="30"/>
        <end position="50"/>
    </location>
</feature>
<feature type="transmembrane region" description="Helical" evidence="1">
    <location>
        <begin position="62"/>
        <end position="82"/>
    </location>
</feature>
<gene>
    <name type="ordered locus">MJ1223</name>
</gene>
<protein>
    <recommendedName>
        <fullName>Uncharacterized protein MJ1223</fullName>
    </recommendedName>
</protein>
<proteinExistence type="predicted"/>
<name>Y1223_METJA</name>
<sequence length="92" mass="9739">MNIYVWLFAIIALSFSALVGLRLSFKKGTANVLVGESIITVVAGTLIVVISQKYNLAFADTIALAIFICGVVGAFAFCKVIGGDNEKAKQPN</sequence>
<organism>
    <name type="scientific">Methanocaldococcus jannaschii (strain ATCC 43067 / DSM 2661 / JAL-1 / JCM 10045 / NBRC 100440)</name>
    <name type="common">Methanococcus jannaschii</name>
    <dbReference type="NCBI Taxonomy" id="243232"/>
    <lineage>
        <taxon>Archaea</taxon>
        <taxon>Methanobacteriati</taxon>
        <taxon>Methanobacteriota</taxon>
        <taxon>Methanomada group</taxon>
        <taxon>Methanococci</taxon>
        <taxon>Methanococcales</taxon>
        <taxon>Methanocaldococcaceae</taxon>
        <taxon>Methanocaldococcus</taxon>
    </lineage>
</organism>
<evidence type="ECO:0000255" key="1"/>
<evidence type="ECO:0000305" key="2"/>
<comment type="subcellular location">
    <subcellularLocation>
        <location evidence="2">Cell membrane</location>
        <topology evidence="2">Multi-pass membrane protein</topology>
    </subcellularLocation>
</comment>
<comment type="similarity">
    <text evidence="2">To M.thermoautotrophicum MTH1250.</text>
</comment>
<dbReference type="EMBL" id="L77117">
    <property type="protein sequence ID" value="AAB99235.1"/>
    <property type="molecule type" value="Genomic_DNA"/>
</dbReference>
<dbReference type="PIR" id="F64452">
    <property type="entry name" value="F64452"/>
</dbReference>
<dbReference type="RefSeq" id="WP_010870735.1">
    <property type="nucleotide sequence ID" value="NC_000909.1"/>
</dbReference>
<dbReference type="SMR" id="Q58620"/>
<dbReference type="FunCoup" id="Q58620">
    <property type="interactions" value="6"/>
</dbReference>
<dbReference type="STRING" id="243232.MJ_1223"/>
<dbReference type="PaxDb" id="243232-MJ_1223"/>
<dbReference type="EnsemblBacteria" id="AAB99235">
    <property type="protein sequence ID" value="AAB99235"/>
    <property type="gene ID" value="MJ_1223"/>
</dbReference>
<dbReference type="GeneID" id="1452119"/>
<dbReference type="KEGG" id="mja:MJ_1223"/>
<dbReference type="eggNOG" id="arCOG04878">
    <property type="taxonomic scope" value="Archaea"/>
</dbReference>
<dbReference type="HOGENOM" id="CLU_189621_0_0_2"/>
<dbReference type="InParanoid" id="Q58620"/>
<dbReference type="OrthoDB" id="64746at2157"/>
<dbReference type="Proteomes" id="UP000000805">
    <property type="component" value="Chromosome"/>
</dbReference>
<dbReference type="GO" id="GO:0005886">
    <property type="term" value="C:plasma membrane"/>
    <property type="evidence" value="ECO:0007669"/>
    <property type="project" value="UniProtKB-SubCell"/>
</dbReference>
<accession>Q58620</accession>